<accession>B9JZC0</accession>
<reference key="1">
    <citation type="journal article" date="2009" name="J. Bacteriol.">
        <title>Genome sequences of three Agrobacterium biovars help elucidate the evolution of multichromosome genomes in bacteria.</title>
        <authorList>
            <person name="Slater S.C."/>
            <person name="Goldman B.S."/>
            <person name="Goodner B."/>
            <person name="Setubal J.C."/>
            <person name="Farrand S.K."/>
            <person name="Nester E.W."/>
            <person name="Burr T.J."/>
            <person name="Banta L."/>
            <person name="Dickerman A.W."/>
            <person name="Paulsen I."/>
            <person name="Otten L."/>
            <person name="Suen G."/>
            <person name="Welch R."/>
            <person name="Almeida N.F."/>
            <person name="Arnold F."/>
            <person name="Burton O.T."/>
            <person name="Du Z."/>
            <person name="Ewing A."/>
            <person name="Godsy E."/>
            <person name="Heisel S."/>
            <person name="Houmiel K.L."/>
            <person name="Jhaveri J."/>
            <person name="Lu J."/>
            <person name="Miller N.M."/>
            <person name="Norton S."/>
            <person name="Chen Q."/>
            <person name="Phoolcharoen W."/>
            <person name="Ohlin V."/>
            <person name="Ondrusek D."/>
            <person name="Pride N."/>
            <person name="Stricklin S.L."/>
            <person name="Sun J."/>
            <person name="Wheeler C."/>
            <person name="Wilson L."/>
            <person name="Zhu H."/>
            <person name="Wood D.W."/>
        </authorList>
    </citation>
    <scope>NUCLEOTIDE SEQUENCE [LARGE SCALE GENOMIC DNA]</scope>
    <source>
        <strain>ATCC BAA-846 / DSM 112012 / S4</strain>
    </source>
</reference>
<protein>
    <recommendedName>
        <fullName evidence="1">Orotidine 5'-phosphate decarboxylase</fullName>
        <ecNumber evidence="1">4.1.1.23</ecNumber>
    </recommendedName>
    <alternativeName>
        <fullName evidence="1">OMP decarboxylase</fullName>
        <shortName evidence="1">OMPDCase</shortName>
        <shortName evidence="1">OMPdecase</shortName>
    </alternativeName>
</protein>
<name>PYRF_ALLAM</name>
<gene>
    <name evidence="1" type="primary">pyrF</name>
    <name type="ordered locus">Avi_0347</name>
</gene>
<proteinExistence type="inferred from homology"/>
<feature type="chain" id="PRO_1000164555" description="Orotidine 5'-phosphate decarboxylase">
    <location>
        <begin position="1"/>
        <end position="231"/>
    </location>
</feature>
<feature type="active site" description="Proton donor" evidence="1">
    <location>
        <position position="63"/>
    </location>
</feature>
<feature type="binding site" evidence="1">
    <location>
        <position position="12"/>
    </location>
    <ligand>
        <name>substrate</name>
    </ligand>
</feature>
<feature type="binding site" evidence="1">
    <location>
        <position position="34"/>
    </location>
    <ligand>
        <name>substrate</name>
    </ligand>
</feature>
<feature type="binding site" evidence="1">
    <location>
        <begin position="61"/>
        <end position="70"/>
    </location>
    <ligand>
        <name>substrate</name>
    </ligand>
</feature>
<feature type="binding site" evidence="1">
    <location>
        <position position="116"/>
    </location>
    <ligand>
        <name>substrate</name>
    </ligand>
</feature>
<feature type="binding site" evidence="1">
    <location>
        <position position="177"/>
    </location>
    <ligand>
        <name>substrate</name>
    </ligand>
</feature>
<feature type="binding site" evidence="1">
    <location>
        <position position="186"/>
    </location>
    <ligand>
        <name>substrate</name>
    </ligand>
</feature>
<feature type="binding site" evidence="1">
    <location>
        <position position="206"/>
    </location>
    <ligand>
        <name>substrate</name>
    </ligand>
</feature>
<feature type="binding site" evidence="1">
    <location>
        <position position="207"/>
    </location>
    <ligand>
        <name>substrate</name>
    </ligand>
</feature>
<sequence length="231" mass="24265">MDARNRLIVGLDVATVTEAEKLVSTLAEDVTFYKIGYQLAFAGGLEFARDLAQSGKKVFLDMKLLDIDNTVASAVENIVRMGMTMLTLHAYPKAMQAAVEAAQGSGLCLLGVTVLTSMDDQDLNDAGYQGDARSLVLKRAAQAKEKGMGGIVCSAQEAQAVRAILGSDMAIVTPGIRPAGSDAGDQKRVMTPADAIHAGSSHLVVGRPIVKADDPRAATQVILAEMQAAFT</sequence>
<dbReference type="EC" id="4.1.1.23" evidence="1"/>
<dbReference type="EMBL" id="CP000633">
    <property type="protein sequence ID" value="ACM35232.1"/>
    <property type="molecule type" value="Genomic_DNA"/>
</dbReference>
<dbReference type="RefSeq" id="WP_012654762.1">
    <property type="nucleotide sequence ID" value="NC_011989.1"/>
</dbReference>
<dbReference type="SMR" id="B9JZC0"/>
<dbReference type="STRING" id="311402.Avi_0347"/>
<dbReference type="KEGG" id="avi:Avi_0347"/>
<dbReference type="eggNOG" id="COG0284">
    <property type="taxonomic scope" value="Bacteria"/>
</dbReference>
<dbReference type="HOGENOM" id="CLU_067069_1_0_5"/>
<dbReference type="UniPathway" id="UPA00070">
    <property type="reaction ID" value="UER00120"/>
</dbReference>
<dbReference type="Proteomes" id="UP000001596">
    <property type="component" value="Chromosome 1"/>
</dbReference>
<dbReference type="GO" id="GO:0005829">
    <property type="term" value="C:cytosol"/>
    <property type="evidence" value="ECO:0007669"/>
    <property type="project" value="TreeGrafter"/>
</dbReference>
<dbReference type="GO" id="GO:0004590">
    <property type="term" value="F:orotidine-5'-phosphate decarboxylase activity"/>
    <property type="evidence" value="ECO:0007669"/>
    <property type="project" value="UniProtKB-UniRule"/>
</dbReference>
<dbReference type="GO" id="GO:0006207">
    <property type="term" value="P:'de novo' pyrimidine nucleobase biosynthetic process"/>
    <property type="evidence" value="ECO:0007669"/>
    <property type="project" value="InterPro"/>
</dbReference>
<dbReference type="GO" id="GO:0044205">
    <property type="term" value="P:'de novo' UMP biosynthetic process"/>
    <property type="evidence" value="ECO:0007669"/>
    <property type="project" value="UniProtKB-UniRule"/>
</dbReference>
<dbReference type="CDD" id="cd04725">
    <property type="entry name" value="OMP_decarboxylase_like"/>
    <property type="match status" value="1"/>
</dbReference>
<dbReference type="Gene3D" id="3.20.20.70">
    <property type="entry name" value="Aldolase class I"/>
    <property type="match status" value="1"/>
</dbReference>
<dbReference type="HAMAP" id="MF_01200_B">
    <property type="entry name" value="OMPdecase_type1_B"/>
    <property type="match status" value="1"/>
</dbReference>
<dbReference type="InterPro" id="IPR013785">
    <property type="entry name" value="Aldolase_TIM"/>
</dbReference>
<dbReference type="InterPro" id="IPR014732">
    <property type="entry name" value="OMPdecase"/>
</dbReference>
<dbReference type="InterPro" id="IPR018089">
    <property type="entry name" value="OMPdecase_AS"/>
</dbReference>
<dbReference type="InterPro" id="IPR047596">
    <property type="entry name" value="OMPdecase_bac"/>
</dbReference>
<dbReference type="InterPro" id="IPR001754">
    <property type="entry name" value="OMPdeCOase_dom"/>
</dbReference>
<dbReference type="InterPro" id="IPR011060">
    <property type="entry name" value="RibuloseP-bd_barrel"/>
</dbReference>
<dbReference type="NCBIfam" id="NF001273">
    <property type="entry name" value="PRK00230.1"/>
    <property type="match status" value="1"/>
</dbReference>
<dbReference type="NCBIfam" id="TIGR01740">
    <property type="entry name" value="pyrF"/>
    <property type="match status" value="1"/>
</dbReference>
<dbReference type="PANTHER" id="PTHR32119">
    <property type="entry name" value="OROTIDINE 5'-PHOSPHATE DECARBOXYLASE"/>
    <property type="match status" value="1"/>
</dbReference>
<dbReference type="PANTHER" id="PTHR32119:SF2">
    <property type="entry name" value="OROTIDINE 5'-PHOSPHATE DECARBOXYLASE"/>
    <property type="match status" value="1"/>
</dbReference>
<dbReference type="Pfam" id="PF00215">
    <property type="entry name" value="OMPdecase"/>
    <property type="match status" value="1"/>
</dbReference>
<dbReference type="SMART" id="SM00934">
    <property type="entry name" value="OMPdecase"/>
    <property type="match status" value="1"/>
</dbReference>
<dbReference type="SUPFAM" id="SSF51366">
    <property type="entry name" value="Ribulose-phoshate binding barrel"/>
    <property type="match status" value="1"/>
</dbReference>
<dbReference type="PROSITE" id="PS00156">
    <property type="entry name" value="OMPDECASE"/>
    <property type="match status" value="1"/>
</dbReference>
<comment type="function">
    <text evidence="1">Catalyzes the decarboxylation of orotidine 5'-monophosphate (OMP) to uridine 5'-monophosphate (UMP).</text>
</comment>
<comment type="catalytic activity">
    <reaction evidence="1">
        <text>orotidine 5'-phosphate + H(+) = UMP + CO2</text>
        <dbReference type="Rhea" id="RHEA:11596"/>
        <dbReference type="ChEBI" id="CHEBI:15378"/>
        <dbReference type="ChEBI" id="CHEBI:16526"/>
        <dbReference type="ChEBI" id="CHEBI:57538"/>
        <dbReference type="ChEBI" id="CHEBI:57865"/>
        <dbReference type="EC" id="4.1.1.23"/>
    </reaction>
</comment>
<comment type="pathway">
    <text evidence="1">Pyrimidine metabolism; UMP biosynthesis via de novo pathway; UMP from orotate: step 2/2.</text>
</comment>
<comment type="subunit">
    <text evidence="1">Homodimer.</text>
</comment>
<comment type="similarity">
    <text evidence="1">Belongs to the OMP decarboxylase family. Type 1 subfamily.</text>
</comment>
<keyword id="KW-0210">Decarboxylase</keyword>
<keyword id="KW-0456">Lyase</keyword>
<keyword id="KW-0665">Pyrimidine biosynthesis</keyword>
<keyword id="KW-1185">Reference proteome</keyword>
<organism>
    <name type="scientific">Allorhizobium ampelinum (strain ATCC BAA-846 / DSM 112012 / S4)</name>
    <name type="common">Agrobacterium vitis (strain S4)</name>
    <dbReference type="NCBI Taxonomy" id="311402"/>
    <lineage>
        <taxon>Bacteria</taxon>
        <taxon>Pseudomonadati</taxon>
        <taxon>Pseudomonadota</taxon>
        <taxon>Alphaproteobacteria</taxon>
        <taxon>Hyphomicrobiales</taxon>
        <taxon>Rhizobiaceae</taxon>
        <taxon>Rhizobium/Agrobacterium group</taxon>
        <taxon>Allorhizobium</taxon>
        <taxon>Allorhizobium ampelinum</taxon>
    </lineage>
</organism>
<evidence type="ECO:0000255" key="1">
    <source>
        <dbReference type="HAMAP-Rule" id="MF_01200"/>
    </source>
</evidence>